<feature type="chain" id="PRO_1000120187" description="Large ribosomal subunit protein bL32">
    <location>
        <begin position="1"/>
        <end position="57"/>
    </location>
</feature>
<feature type="region of interest" description="Disordered" evidence="2">
    <location>
        <begin position="1"/>
        <end position="20"/>
    </location>
</feature>
<feature type="compositionally biased region" description="Basic residues" evidence="2">
    <location>
        <begin position="7"/>
        <end position="19"/>
    </location>
</feature>
<comment type="similarity">
    <text evidence="1">Belongs to the bacterial ribosomal protein bL32 family.</text>
</comment>
<dbReference type="EMBL" id="CP001184">
    <property type="protein sequence ID" value="ACI59996.1"/>
    <property type="molecule type" value="Genomic_DNA"/>
</dbReference>
<dbReference type="RefSeq" id="WP_004026178.1">
    <property type="nucleotide sequence ID" value="NC_011374.1"/>
</dbReference>
<dbReference type="SMR" id="B5ZBE3"/>
<dbReference type="STRING" id="565575.UUR10_0340"/>
<dbReference type="GeneID" id="93848817"/>
<dbReference type="KEGG" id="uue:UUR10_0340"/>
<dbReference type="eggNOG" id="COG0333">
    <property type="taxonomic scope" value="Bacteria"/>
</dbReference>
<dbReference type="HOGENOM" id="CLU_129084_1_3_14"/>
<dbReference type="OrthoDB" id="9812874at2"/>
<dbReference type="Proteomes" id="UP000002018">
    <property type="component" value="Chromosome"/>
</dbReference>
<dbReference type="GO" id="GO:0015934">
    <property type="term" value="C:large ribosomal subunit"/>
    <property type="evidence" value="ECO:0007669"/>
    <property type="project" value="InterPro"/>
</dbReference>
<dbReference type="GO" id="GO:0003735">
    <property type="term" value="F:structural constituent of ribosome"/>
    <property type="evidence" value="ECO:0007669"/>
    <property type="project" value="InterPro"/>
</dbReference>
<dbReference type="GO" id="GO:0006412">
    <property type="term" value="P:translation"/>
    <property type="evidence" value="ECO:0007669"/>
    <property type="project" value="UniProtKB-UniRule"/>
</dbReference>
<dbReference type="HAMAP" id="MF_00340">
    <property type="entry name" value="Ribosomal_bL32"/>
    <property type="match status" value="1"/>
</dbReference>
<dbReference type="InterPro" id="IPR002677">
    <property type="entry name" value="Ribosomal_bL32"/>
</dbReference>
<dbReference type="InterPro" id="IPR044957">
    <property type="entry name" value="Ribosomal_bL32_bact"/>
</dbReference>
<dbReference type="InterPro" id="IPR011332">
    <property type="entry name" value="Ribosomal_zn-bd"/>
</dbReference>
<dbReference type="NCBIfam" id="TIGR01031">
    <property type="entry name" value="rpmF_bact"/>
    <property type="match status" value="1"/>
</dbReference>
<dbReference type="PANTHER" id="PTHR35534">
    <property type="entry name" value="50S RIBOSOMAL PROTEIN L32"/>
    <property type="match status" value="1"/>
</dbReference>
<dbReference type="PANTHER" id="PTHR35534:SF1">
    <property type="entry name" value="LARGE RIBOSOMAL SUBUNIT PROTEIN BL32"/>
    <property type="match status" value="1"/>
</dbReference>
<dbReference type="Pfam" id="PF01783">
    <property type="entry name" value="Ribosomal_L32p"/>
    <property type="match status" value="1"/>
</dbReference>
<dbReference type="SUPFAM" id="SSF57829">
    <property type="entry name" value="Zn-binding ribosomal proteins"/>
    <property type="match status" value="1"/>
</dbReference>
<accession>B5ZBE3</accession>
<name>RL32_UREU1</name>
<protein>
    <recommendedName>
        <fullName evidence="1">Large ribosomal subunit protein bL32</fullName>
    </recommendedName>
    <alternativeName>
        <fullName evidence="3">50S ribosomal protein L32</fullName>
    </alternativeName>
</protein>
<evidence type="ECO:0000255" key="1">
    <source>
        <dbReference type="HAMAP-Rule" id="MF_00340"/>
    </source>
</evidence>
<evidence type="ECO:0000256" key="2">
    <source>
        <dbReference type="SAM" id="MobiDB-lite"/>
    </source>
</evidence>
<evidence type="ECO:0000305" key="3"/>
<gene>
    <name evidence="1" type="primary">rpmF</name>
    <name type="ordered locus">UUR10_0340</name>
</gene>
<proteinExistence type="inferred from homology"/>
<sequence>MAVQQRRVSKSRKGMRRSHDHLTVSNTVACNECGKALLPHRACRDCKTYRSIKLSIK</sequence>
<reference key="1">
    <citation type="submission" date="2008-10" db="EMBL/GenBank/DDBJ databases">
        <title>Genome sequence of Ureaplasma urealyticum serovar 10 ATCC-33699.</title>
        <authorList>
            <person name="Shrivastava S."/>
            <person name="Methe B.A."/>
            <person name="Glass J."/>
            <person name="White K."/>
            <person name="Duffy L.B."/>
        </authorList>
    </citation>
    <scope>NUCLEOTIDE SEQUENCE [LARGE SCALE GENOMIC DNA]</scope>
    <source>
        <strain>ATCC 33699 / Western</strain>
    </source>
</reference>
<keyword id="KW-0687">Ribonucleoprotein</keyword>
<keyword id="KW-0689">Ribosomal protein</keyword>
<organism>
    <name type="scientific">Ureaplasma urealyticum serovar 10 (strain ATCC 33699 / Western)</name>
    <dbReference type="NCBI Taxonomy" id="565575"/>
    <lineage>
        <taxon>Bacteria</taxon>
        <taxon>Bacillati</taxon>
        <taxon>Mycoplasmatota</taxon>
        <taxon>Mycoplasmoidales</taxon>
        <taxon>Mycoplasmoidaceae</taxon>
        <taxon>Ureaplasma</taxon>
    </lineage>
</organism>